<sequence>MLPAQKHTLETLLENSVKQVVQASKGDADAAFVLPAIALERPKVAAHGDVACNVALQLAKPLGANPRQLAERIVAALTAQPAAAGLVDAAEIAGPGFINLRLTPASKQAVIGAVFAQGRAFGASEREHGKRVLLEFVSANPTGPLHVGHGRQAALGDALANVLASQGYAVHREFYYNDAGVQIGNLAISTQARARGLKPGDAGWPEAAYNGEYIADIARDYLNGETVAASDGEPVTGKRDADDLEAIRKFAVAYLRREQDMDLKAFGVKFDQYYLESSLYTEGRVEKTVDALIAAGMTYEQEGALWLRTTDEGDDKDRVMRKTDGTYTYFVPDVAYHVTKWERGFTKVINIQGSDHHGTIARVRAGLQGLHIGIPKGYPDYVLHKMVTVMRDGQEVKISKRAGSYVTVRDLIEWSGGATPGSEVSPELLDEATITRGRDAVRFFLISRKADTEFVFDIDLALKQNDENPVYYVQYAHARICSVLNEWKSRYGATDALLPGADLSPLDSKQAMALMQKLAEYPDVLAHAANELAPHAVAFYLRELASEFHSFYNAERVLVDEEAPRTARIALLAATRQVLENGLAMLGVSAPSKM</sequence>
<gene>
    <name evidence="1" type="primary">argS</name>
    <name type="ordered locus">BTH_I0355</name>
</gene>
<dbReference type="EC" id="6.1.1.19" evidence="1"/>
<dbReference type="EMBL" id="CP000086">
    <property type="protein sequence ID" value="ABC39196.1"/>
    <property type="molecule type" value="Genomic_DNA"/>
</dbReference>
<dbReference type="RefSeq" id="WP_009893259.1">
    <property type="nucleotide sequence ID" value="NZ_CP008785.1"/>
</dbReference>
<dbReference type="SMR" id="Q2T1N6"/>
<dbReference type="GeneID" id="45120119"/>
<dbReference type="KEGG" id="bte:BTH_I0355"/>
<dbReference type="HOGENOM" id="CLU_006406_0_1_4"/>
<dbReference type="Proteomes" id="UP000001930">
    <property type="component" value="Chromosome I"/>
</dbReference>
<dbReference type="GO" id="GO:0005737">
    <property type="term" value="C:cytoplasm"/>
    <property type="evidence" value="ECO:0007669"/>
    <property type="project" value="UniProtKB-SubCell"/>
</dbReference>
<dbReference type="GO" id="GO:0004814">
    <property type="term" value="F:arginine-tRNA ligase activity"/>
    <property type="evidence" value="ECO:0007669"/>
    <property type="project" value="UniProtKB-UniRule"/>
</dbReference>
<dbReference type="GO" id="GO:0005524">
    <property type="term" value="F:ATP binding"/>
    <property type="evidence" value="ECO:0007669"/>
    <property type="project" value="UniProtKB-UniRule"/>
</dbReference>
<dbReference type="GO" id="GO:0006420">
    <property type="term" value="P:arginyl-tRNA aminoacylation"/>
    <property type="evidence" value="ECO:0007669"/>
    <property type="project" value="UniProtKB-UniRule"/>
</dbReference>
<dbReference type="CDD" id="cd07956">
    <property type="entry name" value="Anticodon_Ia_Arg"/>
    <property type="match status" value="1"/>
</dbReference>
<dbReference type="CDD" id="cd00671">
    <property type="entry name" value="ArgRS_core"/>
    <property type="match status" value="1"/>
</dbReference>
<dbReference type="FunFam" id="1.10.730.10:FF:000008">
    <property type="entry name" value="Arginine--tRNA ligase"/>
    <property type="match status" value="1"/>
</dbReference>
<dbReference type="FunFam" id="3.40.50.620:FF:000062">
    <property type="entry name" value="Arginine--tRNA ligase"/>
    <property type="match status" value="1"/>
</dbReference>
<dbReference type="Gene3D" id="3.30.1360.70">
    <property type="entry name" value="Arginyl tRNA synthetase N-terminal domain"/>
    <property type="match status" value="1"/>
</dbReference>
<dbReference type="Gene3D" id="3.40.50.620">
    <property type="entry name" value="HUPs"/>
    <property type="match status" value="1"/>
</dbReference>
<dbReference type="Gene3D" id="1.10.730.10">
    <property type="entry name" value="Isoleucyl-tRNA Synthetase, Domain 1"/>
    <property type="match status" value="1"/>
</dbReference>
<dbReference type="HAMAP" id="MF_00123">
    <property type="entry name" value="Arg_tRNA_synth"/>
    <property type="match status" value="1"/>
</dbReference>
<dbReference type="InterPro" id="IPR001412">
    <property type="entry name" value="aa-tRNA-synth_I_CS"/>
</dbReference>
<dbReference type="InterPro" id="IPR001278">
    <property type="entry name" value="Arg-tRNA-ligase"/>
</dbReference>
<dbReference type="InterPro" id="IPR005148">
    <property type="entry name" value="Arg-tRNA-synth_N"/>
</dbReference>
<dbReference type="InterPro" id="IPR036695">
    <property type="entry name" value="Arg-tRNA-synth_N_sf"/>
</dbReference>
<dbReference type="InterPro" id="IPR035684">
    <property type="entry name" value="ArgRS_core"/>
</dbReference>
<dbReference type="InterPro" id="IPR008909">
    <property type="entry name" value="DALR_anticod-bd"/>
</dbReference>
<dbReference type="InterPro" id="IPR014729">
    <property type="entry name" value="Rossmann-like_a/b/a_fold"/>
</dbReference>
<dbReference type="InterPro" id="IPR009080">
    <property type="entry name" value="tRNAsynth_Ia_anticodon-bd"/>
</dbReference>
<dbReference type="NCBIfam" id="TIGR00456">
    <property type="entry name" value="argS"/>
    <property type="match status" value="1"/>
</dbReference>
<dbReference type="PANTHER" id="PTHR11956:SF5">
    <property type="entry name" value="ARGININE--TRNA LIGASE, CYTOPLASMIC"/>
    <property type="match status" value="1"/>
</dbReference>
<dbReference type="PANTHER" id="PTHR11956">
    <property type="entry name" value="ARGINYL-TRNA SYNTHETASE"/>
    <property type="match status" value="1"/>
</dbReference>
<dbReference type="Pfam" id="PF03485">
    <property type="entry name" value="Arg_tRNA_synt_N"/>
    <property type="match status" value="1"/>
</dbReference>
<dbReference type="Pfam" id="PF05746">
    <property type="entry name" value="DALR_1"/>
    <property type="match status" value="1"/>
</dbReference>
<dbReference type="Pfam" id="PF00750">
    <property type="entry name" value="tRNA-synt_1d"/>
    <property type="match status" value="1"/>
</dbReference>
<dbReference type="PRINTS" id="PR01038">
    <property type="entry name" value="TRNASYNTHARG"/>
</dbReference>
<dbReference type="SMART" id="SM01016">
    <property type="entry name" value="Arg_tRNA_synt_N"/>
    <property type="match status" value="1"/>
</dbReference>
<dbReference type="SMART" id="SM00836">
    <property type="entry name" value="DALR_1"/>
    <property type="match status" value="1"/>
</dbReference>
<dbReference type="SUPFAM" id="SSF47323">
    <property type="entry name" value="Anticodon-binding domain of a subclass of class I aminoacyl-tRNA synthetases"/>
    <property type="match status" value="1"/>
</dbReference>
<dbReference type="SUPFAM" id="SSF55190">
    <property type="entry name" value="Arginyl-tRNA synthetase (ArgRS), N-terminal 'additional' domain"/>
    <property type="match status" value="1"/>
</dbReference>
<dbReference type="SUPFAM" id="SSF52374">
    <property type="entry name" value="Nucleotidylyl transferase"/>
    <property type="match status" value="1"/>
</dbReference>
<dbReference type="PROSITE" id="PS00178">
    <property type="entry name" value="AA_TRNA_LIGASE_I"/>
    <property type="match status" value="1"/>
</dbReference>
<proteinExistence type="inferred from homology"/>
<evidence type="ECO:0000255" key="1">
    <source>
        <dbReference type="HAMAP-Rule" id="MF_00123"/>
    </source>
</evidence>
<accession>Q2T1N6</accession>
<organism>
    <name type="scientific">Burkholderia thailandensis (strain ATCC 700388 / DSM 13276 / CCUG 48851 / CIP 106301 / E264)</name>
    <dbReference type="NCBI Taxonomy" id="271848"/>
    <lineage>
        <taxon>Bacteria</taxon>
        <taxon>Pseudomonadati</taxon>
        <taxon>Pseudomonadota</taxon>
        <taxon>Betaproteobacteria</taxon>
        <taxon>Burkholderiales</taxon>
        <taxon>Burkholderiaceae</taxon>
        <taxon>Burkholderia</taxon>
        <taxon>pseudomallei group</taxon>
    </lineage>
</organism>
<protein>
    <recommendedName>
        <fullName evidence="1">Arginine--tRNA ligase</fullName>
        <ecNumber evidence="1">6.1.1.19</ecNumber>
    </recommendedName>
    <alternativeName>
        <fullName evidence="1">Arginyl-tRNA synthetase</fullName>
        <shortName evidence="1">ArgRS</shortName>
    </alternativeName>
</protein>
<comment type="catalytic activity">
    <reaction evidence="1">
        <text>tRNA(Arg) + L-arginine + ATP = L-arginyl-tRNA(Arg) + AMP + diphosphate</text>
        <dbReference type="Rhea" id="RHEA:20301"/>
        <dbReference type="Rhea" id="RHEA-COMP:9658"/>
        <dbReference type="Rhea" id="RHEA-COMP:9673"/>
        <dbReference type="ChEBI" id="CHEBI:30616"/>
        <dbReference type="ChEBI" id="CHEBI:32682"/>
        <dbReference type="ChEBI" id="CHEBI:33019"/>
        <dbReference type="ChEBI" id="CHEBI:78442"/>
        <dbReference type="ChEBI" id="CHEBI:78513"/>
        <dbReference type="ChEBI" id="CHEBI:456215"/>
        <dbReference type="EC" id="6.1.1.19"/>
    </reaction>
</comment>
<comment type="subunit">
    <text evidence="1">Monomer.</text>
</comment>
<comment type="subcellular location">
    <subcellularLocation>
        <location evidence="1">Cytoplasm</location>
    </subcellularLocation>
</comment>
<comment type="similarity">
    <text evidence="1">Belongs to the class-I aminoacyl-tRNA synthetase family.</text>
</comment>
<feature type="chain" id="PRO_0000242000" description="Arginine--tRNA ligase">
    <location>
        <begin position="1"/>
        <end position="594"/>
    </location>
</feature>
<feature type="short sequence motif" description="'HIGH' region">
    <location>
        <begin position="139"/>
        <end position="149"/>
    </location>
</feature>
<name>SYR_BURTA</name>
<keyword id="KW-0030">Aminoacyl-tRNA synthetase</keyword>
<keyword id="KW-0067">ATP-binding</keyword>
<keyword id="KW-0963">Cytoplasm</keyword>
<keyword id="KW-0436">Ligase</keyword>
<keyword id="KW-0547">Nucleotide-binding</keyword>
<keyword id="KW-0648">Protein biosynthesis</keyword>
<reference key="1">
    <citation type="journal article" date="2005" name="BMC Genomics">
        <title>Bacterial genome adaptation to niches: divergence of the potential virulence genes in three Burkholderia species of different survival strategies.</title>
        <authorList>
            <person name="Kim H.S."/>
            <person name="Schell M.A."/>
            <person name="Yu Y."/>
            <person name="Ulrich R.L."/>
            <person name="Sarria S.H."/>
            <person name="Nierman W.C."/>
            <person name="DeShazer D."/>
        </authorList>
    </citation>
    <scope>NUCLEOTIDE SEQUENCE [LARGE SCALE GENOMIC DNA]</scope>
    <source>
        <strain>ATCC 700388 / DSM 13276 / CCUG 48851 / CIP 106301 / E264</strain>
    </source>
</reference>